<gene>
    <name type="primary">rps4</name>
</gene>
<keyword id="KW-0194">Cyanelle</keyword>
<keyword id="KW-0934">Plastid</keyword>
<keyword id="KW-0687">Ribonucleoprotein</keyword>
<keyword id="KW-0689">Ribosomal protein</keyword>
<keyword id="KW-0694">RNA-binding</keyword>
<keyword id="KW-0699">rRNA-binding</keyword>
<evidence type="ECO:0000250" key="1"/>
<evidence type="ECO:0000305" key="2"/>
<comment type="function">
    <text evidence="1">One of the primary rRNA binding proteins, it binds directly to 16S rRNA where it nucleates assembly of the body of the 30S subunit.</text>
</comment>
<comment type="function">
    <text evidence="1">With S5 and S12 plays an important role in translational accuracy.</text>
</comment>
<comment type="subunit">
    <text evidence="1">Part of the 30S ribosomal subunit. Contacts protein S5. The interaction surface between S4 and S5 is involved in control of translational fidelity (By similarity).</text>
</comment>
<comment type="subcellular location">
    <subcellularLocation>
        <location>Plastid</location>
        <location>Cyanelle</location>
    </subcellularLocation>
</comment>
<comment type="similarity">
    <text evidence="2">Belongs to the universal ribosomal protein uS4 family.</text>
</comment>
<accession>P48133</accession>
<geneLocation type="cyanelle"/>
<reference key="1">
    <citation type="journal article" date="1995" name="Plant Mol. Biol. Rep.">
        <title>Nucleotide sequence of the cyanelle DNA from Cyanophora paradoxa.</title>
        <authorList>
            <person name="Stirewalt V.L."/>
            <person name="Michalowski C.B."/>
            <person name="Loeffelhardt W."/>
            <person name="Bohnert H.J."/>
            <person name="Bryant D.A."/>
        </authorList>
    </citation>
    <scope>NUCLEOTIDE SEQUENCE [LARGE SCALE GENOMIC DNA]</scope>
    <source>
        <strain>UTEX LB 555 / Pringsheim</strain>
    </source>
</reference>
<reference key="2">
    <citation type="book" date="1997" name="Eukaryotism and symbiosis">
        <title>The complete sequence of the cyanelle genome of Cyanophora paradoxa: the genetic complexity of a primitive plastid.</title>
        <editorList>
            <person name="Schenk H.E.A."/>
            <person name="Herrmann R."/>
            <person name="Jeon K.W."/>
            <person name="Mueller N.E."/>
            <person name="Schwemmler W."/>
        </editorList>
        <authorList>
            <person name="Loeffelhardt W."/>
            <person name="Stirewalt V.L."/>
            <person name="Michalowski C.B."/>
            <person name="Annarella M."/>
            <person name="Farley J.Y."/>
            <person name="Schluchter W.M."/>
            <person name="Chung S."/>
            <person name="Newmann-Spallart C."/>
            <person name="Steiner J.M."/>
            <person name="Jakowitsch J."/>
            <person name="Bohnert H.J."/>
            <person name="Bryant D.A."/>
        </authorList>
    </citation>
    <scope>NUCLEOTIDE SEQUENCE [LARGE SCALE GENOMIC DNA]</scope>
    <source>
        <strain>UTEX LB 555 / Pringsheim</strain>
    </source>
</reference>
<proteinExistence type="inferred from homology"/>
<name>RR4_CYAPA</name>
<sequence>MSRYKGPSLRIIRRLGELPGLTRKVVKKRKYPPGQHGQKSRKRSEYAIRLEEKQKLRYNYGLTERQLVQCVRRAKQMKGSTGQILLQLLEMRLDNIVFRLGMAPTIPASRQLVNHGHICVNNKVVSIPSYQCKPGDIITVKERNASKKIVETNLLFPGLANLPSHLEFDKSKLQGKVNDIIQREWVALEVNELLIVEFYSR</sequence>
<dbReference type="EMBL" id="U30821">
    <property type="protein sequence ID" value="AAA81243.1"/>
    <property type="molecule type" value="Genomic_DNA"/>
</dbReference>
<dbReference type="PIR" id="T06900">
    <property type="entry name" value="T06900"/>
</dbReference>
<dbReference type="RefSeq" id="NP_043212.1">
    <property type="nucleotide sequence ID" value="NC_001675.1"/>
</dbReference>
<dbReference type="SMR" id="P48133"/>
<dbReference type="GeneID" id="801668"/>
<dbReference type="GO" id="GO:0009842">
    <property type="term" value="C:cyanelle"/>
    <property type="evidence" value="ECO:0007669"/>
    <property type="project" value="UniProtKB-SubCell"/>
</dbReference>
<dbReference type="GO" id="GO:0015935">
    <property type="term" value="C:small ribosomal subunit"/>
    <property type="evidence" value="ECO:0007669"/>
    <property type="project" value="InterPro"/>
</dbReference>
<dbReference type="GO" id="GO:0019843">
    <property type="term" value="F:rRNA binding"/>
    <property type="evidence" value="ECO:0007669"/>
    <property type="project" value="UniProtKB-KW"/>
</dbReference>
<dbReference type="GO" id="GO:0003735">
    <property type="term" value="F:structural constituent of ribosome"/>
    <property type="evidence" value="ECO:0007669"/>
    <property type="project" value="InterPro"/>
</dbReference>
<dbReference type="GO" id="GO:0042274">
    <property type="term" value="P:ribosomal small subunit biogenesis"/>
    <property type="evidence" value="ECO:0007669"/>
    <property type="project" value="TreeGrafter"/>
</dbReference>
<dbReference type="GO" id="GO:0006412">
    <property type="term" value="P:translation"/>
    <property type="evidence" value="ECO:0007669"/>
    <property type="project" value="InterPro"/>
</dbReference>
<dbReference type="CDD" id="cd00165">
    <property type="entry name" value="S4"/>
    <property type="match status" value="1"/>
</dbReference>
<dbReference type="FunFam" id="3.10.290.10:FF:000001">
    <property type="entry name" value="30S ribosomal protein S4"/>
    <property type="match status" value="1"/>
</dbReference>
<dbReference type="FunFam" id="1.10.1050.10:FF:000002">
    <property type="entry name" value="30S ribosomal protein S4, chloroplastic"/>
    <property type="match status" value="1"/>
</dbReference>
<dbReference type="Gene3D" id="1.10.1050.10">
    <property type="entry name" value="Ribosomal Protein S4 Delta 41, Chain A, domain 1"/>
    <property type="match status" value="1"/>
</dbReference>
<dbReference type="Gene3D" id="3.10.290.10">
    <property type="entry name" value="RNA-binding S4 domain"/>
    <property type="match status" value="1"/>
</dbReference>
<dbReference type="HAMAP" id="MF_01306_B">
    <property type="entry name" value="Ribosomal_uS4_B"/>
    <property type="match status" value="1"/>
</dbReference>
<dbReference type="InterPro" id="IPR022801">
    <property type="entry name" value="Ribosomal_uS4"/>
</dbReference>
<dbReference type="InterPro" id="IPR005709">
    <property type="entry name" value="Ribosomal_uS4_bac-type"/>
</dbReference>
<dbReference type="InterPro" id="IPR018079">
    <property type="entry name" value="Ribosomal_uS4_CS"/>
</dbReference>
<dbReference type="InterPro" id="IPR001912">
    <property type="entry name" value="Ribosomal_uS4_N"/>
</dbReference>
<dbReference type="InterPro" id="IPR002942">
    <property type="entry name" value="S4_RNA-bd"/>
</dbReference>
<dbReference type="InterPro" id="IPR036986">
    <property type="entry name" value="S4_RNA-bd_sf"/>
</dbReference>
<dbReference type="NCBIfam" id="NF003717">
    <property type="entry name" value="PRK05327.1"/>
    <property type="match status" value="1"/>
</dbReference>
<dbReference type="NCBIfam" id="TIGR01017">
    <property type="entry name" value="rpsD_bact"/>
    <property type="match status" value="1"/>
</dbReference>
<dbReference type="PANTHER" id="PTHR11831">
    <property type="entry name" value="30S 40S RIBOSOMAL PROTEIN"/>
    <property type="match status" value="1"/>
</dbReference>
<dbReference type="PANTHER" id="PTHR11831:SF4">
    <property type="entry name" value="SMALL RIBOSOMAL SUBUNIT PROTEIN US4M"/>
    <property type="match status" value="1"/>
</dbReference>
<dbReference type="Pfam" id="PF00163">
    <property type="entry name" value="Ribosomal_S4"/>
    <property type="match status" value="1"/>
</dbReference>
<dbReference type="Pfam" id="PF01479">
    <property type="entry name" value="S4"/>
    <property type="match status" value="1"/>
</dbReference>
<dbReference type="SMART" id="SM01390">
    <property type="entry name" value="Ribosomal_S4"/>
    <property type="match status" value="1"/>
</dbReference>
<dbReference type="SMART" id="SM00363">
    <property type="entry name" value="S4"/>
    <property type="match status" value="1"/>
</dbReference>
<dbReference type="SUPFAM" id="SSF55174">
    <property type="entry name" value="Alpha-L RNA-binding motif"/>
    <property type="match status" value="1"/>
</dbReference>
<dbReference type="PROSITE" id="PS00632">
    <property type="entry name" value="RIBOSOMAL_S4"/>
    <property type="match status" value="1"/>
</dbReference>
<dbReference type="PROSITE" id="PS50889">
    <property type="entry name" value="S4"/>
    <property type="match status" value="1"/>
</dbReference>
<organism>
    <name type="scientific">Cyanophora paradoxa</name>
    <dbReference type="NCBI Taxonomy" id="2762"/>
    <lineage>
        <taxon>Eukaryota</taxon>
        <taxon>Glaucocystophyceae</taxon>
        <taxon>Cyanophoraceae</taxon>
        <taxon>Cyanophora</taxon>
    </lineage>
</organism>
<feature type="chain" id="PRO_0000132525" description="Small ribosomal subunit protein uS4c">
    <location>
        <begin position="1"/>
        <end position="201"/>
    </location>
</feature>
<feature type="domain" description="S4 RNA-binding">
    <location>
        <begin position="91"/>
        <end position="153"/>
    </location>
</feature>
<protein>
    <recommendedName>
        <fullName evidence="2">Small ribosomal subunit protein uS4c</fullName>
    </recommendedName>
    <alternativeName>
        <fullName>Cyanelle 30S ribosomal protein S4</fullName>
    </alternativeName>
</protein>